<organism>
    <name type="scientific">Ralstonia pickettii (strain 12J)</name>
    <dbReference type="NCBI Taxonomy" id="402626"/>
    <lineage>
        <taxon>Bacteria</taxon>
        <taxon>Pseudomonadati</taxon>
        <taxon>Pseudomonadota</taxon>
        <taxon>Betaproteobacteria</taxon>
        <taxon>Burkholderiales</taxon>
        <taxon>Burkholderiaceae</taxon>
        <taxon>Ralstonia</taxon>
    </lineage>
</organism>
<sequence length="283" mass="32285">MKVISSIQELRDQLRGQNRVAFVPTMGNLHEGHLSLMRLARQHGDPVVASIFVNRLQFGPNEDFDKYPRTLQDDIEKLQKEGVYVLFAPTERDMYPEPQEYRVEPPHDLGDTLEGEFRPGFFKGVCTVVMKLFCCVQPRVAVFGKKDYQQLMIVRRMAHQFALPVDIVPAETVRADDGLALSSRNVYLTNEERAEAPELYRTLHQVRQDVLETVLQGQASHEEVTTKAMDYLRGRGWQPDYVAVRRRSDLQKPTPENIAAGEPLVVLTAAKLGKTRLIDNLEI</sequence>
<accession>B2UA33</accession>
<feature type="chain" id="PRO_1000097096" description="Pantothenate synthetase">
    <location>
        <begin position="1"/>
        <end position="283"/>
    </location>
</feature>
<feature type="active site" description="Proton donor" evidence="1">
    <location>
        <position position="33"/>
    </location>
</feature>
<feature type="binding site" evidence="1">
    <location>
        <begin position="26"/>
        <end position="33"/>
    </location>
    <ligand>
        <name>ATP</name>
        <dbReference type="ChEBI" id="CHEBI:30616"/>
    </ligand>
</feature>
<feature type="binding site" evidence="1">
    <location>
        <position position="57"/>
    </location>
    <ligand>
        <name>(R)-pantoate</name>
        <dbReference type="ChEBI" id="CHEBI:15980"/>
    </ligand>
</feature>
<feature type="binding site" evidence="1">
    <location>
        <position position="57"/>
    </location>
    <ligand>
        <name>beta-alanine</name>
        <dbReference type="ChEBI" id="CHEBI:57966"/>
    </ligand>
</feature>
<feature type="binding site" evidence="1">
    <location>
        <begin position="144"/>
        <end position="147"/>
    </location>
    <ligand>
        <name>ATP</name>
        <dbReference type="ChEBI" id="CHEBI:30616"/>
    </ligand>
</feature>
<feature type="binding site" evidence="1">
    <location>
        <position position="150"/>
    </location>
    <ligand>
        <name>(R)-pantoate</name>
        <dbReference type="ChEBI" id="CHEBI:15980"/>
    </ligand>
</feature>
<feature type="binding site" evidence="1">
    <location>
        <position position="173"/>
    </location>
    <ligand>
        <name>ATP</name>
        <dbReference type="ChEBI" id="CHEBI:30616"/>
    </ligand>
</feature>
<feature type="binding site" evidence="1">
    <location>
        <begin position="181"/>
        <end position="184"/>
    </location>
    <ligand>
        <name>ATP</name>
        <dbReference type="ChEBI" id="CHEBI:30616"/>
    </ligand>
</feature>
<evidence type="ECO:0000255" key="1">
    <source>
        <dbReference type="HAMAP-Rule" id="MF_00158"/>
    </source>
</evidence>
<keyword id="KW-0067">ATP-binding</keyword>
<keyword id="KW-0963">Cytoplasm</keyword>
<keyword id="KW-0436">Ligase</keyword>
<keyword id="KW-0547">Nucleotide-binding</keyword>
<keyword id="KW-0566">Pantothenate biosynthesis</keyword>
<reference key="1">
    <citation type="submission" date="2008-05" db="EMBL/GenBank/DDBJ databases">
        <title>Complete sequence of chromosome 1 of Ralstonia pickettii 12J.</title>
        <authorList>
            <person name="Lucas S."/>
            <person name="Copeland A."/>
            <person name="Lapidus A."/>
            <person name="Glavina del Rio T."/>
            <person name="Dalin E."/>
            <person name="Tice H."/>
            <person name="Bruce D."/>
            <person name="Goodwin L."/>
            <person name="Pitluck S."/>
            <person name="Meincke L."/>
            <person name="Brettin T."/>
            <person name="Detter J.C."/>
            <person name="Han C."/>
            <person name="Kuske C.R."/>
            <person name="Schmutz J."/>
            <person name="Larimer F."/>
            <person name="Land M."/>
            <person name="Hauser L."/>
            <person name="Kyrpides N."/>
            <person name="Mikhailova N."/>
            <person name="Marsh T."/>
            <person name="Richardson P."/>
        </authorList>
    </citation>
    <scope>NUCLEOTIDE SEQUENCE [LARGE SCALE GENOMIC DNA]</scope>
    <source>
        <strain>12J</strain>
    </source>
</reference>
<gene>
    <name evidence="1" type="primary">panC</name>
    <name type="ordered locus">Rpic_2600</name>
</gene>
<proteinExistence type="inferred from homology"/>
<dbReference type="EC" id="6.3.2.1" evidence="1"/>
<dbReference type="EMBL" id="CP001068">
    <property type="protein sequence ID" value="ACD27727.1"/>
    <property type="molecule type" value="Genomic_DNA"/>
</dbReference>
<dbReference type="SMR" id="B2UA33"/>
<dbReference type="STRING" id="402626.Rpic_2600"/>
<dbReference type="KEGG" id="rpi:Rpic_2600"/>
<dbReference type="eggNOG" id="COG0414">
    <property type="taxonomic scope" value="Bacteria"/>
</dbReference>
<dbReference type="HOGENOM" id="CLU_047148_0_0_4"/>
<dbReference type="UniPathway" id="UPA00028">
    <property type="reaction ID" value="UER00005"/>
</dbReference>
<dbReference type="GO" id="GO:0005829">
    <property type="term" value="C:cytosol"/>
    <property type="evidence" value="ECO:0007669"/>
    <property type="project" value="TreeGrafter"/>
</dbReference>
<dbReference type="GO" id="GO:0005524">
    <property type="term" value="F:ATP binding"/>
    <property type="evidence" value="ECO:0007669"/>
    <property type="project" value="UniProtKB-KW"/>
</dbReference>
<dbReference type="GO" id="GO:0004592">
    <property type="term" value="F:pantoate-beta-alanine ligase activity"/>
    <property type="evidence" value="ECO:0007669"/>
    <property type="project" value="UniProtKB-UniRule"/>
</dbReference>
<dbReference type="GO" id="GO:0015940">
    <property type="term" value="P:pantothenate biosynthetic process"/>
    <property type="evidence" value="ECO:0007669"/>
    <property type="project" value="UniProtKB-UniRule"/>
</dbReference>
<dbReference type="CDD" id="cd00560">
    <property type="entry name" value="PanC"/>
    <property type="match status" value="1"/>
</dbReference>
<dbReference type="Gene3D" id="3.40.50.620">
    <property type="entry name" value="HUPs"/>
    <property type="match status" value="1"/>
</dbReference>
<dbReference type="Gene3D" id="3.30.1300.10">
    <property type="entry name" value="Pantoate-beta-alanine ligase, C-terminal domain"/>
    <property type="match status" value="1"/>
</dbReference>
<dbReference type="HAMAP" id="MF_00158">
    <property type="entry name" value="PanC"/>
    <property type="match status" value="1"/>
</dbReference>
<dbReference type="InterPro" id="IPR004821">
    <property type="entry name" value="Cyt_trans-like"/>
</dbReference>
<dbReference type="InterPro" id="IPR003721">
    <property type="entry name" value="Pantoate_ligase"/>
</dbReference>
<dbReference type="InterPro" id="IPR042176">
    <property type="entry name" value="Pantoate_ligase_C"/>
</dbReference>
<dbReference type="InterPro" id="IPR014729">
    <property type="entry name" value="Rossmann-like_a/b/a_fold"/>
</dbReference>
<dbReference type="NCBIfam" id="TIGR00125">
    <property type="entry name" value="cyt_tran_rel"/>
    <property type="match status" value="1"/>
</dbReference>
<dbReference type="NCBIfam" id="TIGR00018">
    <property type="entry name" value="panC"/>
    <property type="match status" value="1"/>
</dbReference>
<dbReference type="PANTHER" id="PTHR21299">
    <property type="entry name" value="CYTIDYLATE KINASE/PANTOATE-BETA-ALANINE LIGASE"/>
    <property type="match status" value="1"/>
</dbReference>
<dbReference type="PANTHER" id="PTHR21299:SF1">
    <property type="entry name" value="PANTOATE--BETA-ALANINE LIGASE"/>
    <property type="match status" value="1"/>
</dbReference>
<dbReference type="Pfam" id="PF02569">
    <property type="entry name" value="Pantoate_ligase"/>
    <property type="match status" value="1"/>
</dbReference>
<dbReference type="SUPFAM" id="SSF52374">
    <property type="entry name" value="Nucleotidylyl transferase"/>
    <property type="match status" value="1"/>
</dbReference>
<comment type="function">
    <text evidence="1">Catalyzes the condensation of pantoate with beta-alanine in an ATP-dependent reaction via a pantoyl-adenylate intermediate.</text>
</comment>
<comment type="catalytic activity">
    <reaction evidence="1">
        <text>(R)-pantoate + beta-alanine + ATP = (R)-pantothenate + AMP + diphosphate + H(+)</text>
        <dbReference type="Rhea" id="RHEA:10912"/>
        <dbReference type="ChEBI" id="CHEBI:15378"/>
        <dbReference type="ChEBI" id="CHEBI:15980"/>
        <dbReference type="ChEBI" id="CHEBI:29032"/>
        <dbReference type="ChEBI" id="CHEBI:30616"/>
        <dbReference type="ChEBI" id="CHEBI:33019"/>
        <dbReference type="ChEBI" id="CHEBI:57966"/>
        <dbReference type="ChEBI" id="CHEBI:456215"/>
        <dbReference type="EC" id="6.3.2.1"/>
    </reaction>
</comment>
<comment type="pathway">
    <text evidence="1">Cofactor biosynthesis; (R)-pantothenate biosynthesis; (R)-pantothenate from (R)-pantoate and beta-alanine: step 1/1.</text>
</comment>
<comment type="subunit">
    <text evidence="1">Homodimer.</text>
</comment>
<comment type="subcellular location">
    <subcellularLocation>
        <location evidence="1">Cytoplasm</location>
    </subcellularLocation>
</comment>
<comment type="miscellaneous">
    <text evidence="1">The reaction proceeds by a bi uni uni bi ping pong mechanism.</text>
</comment>
<comment type="similarity">
    <text evidence="1">Belongs to the pantothenate synthetase family.</text>
</comment>
<protein>
    <recommendedName>
        <fullName evidence="1">Pantothenate synthetase</fullName>
        <shortName evidence="1">PS</shortName>
        <ecNumber evidence="1">6.3.2.1</ecNumber>
    </recommendedName>
    <alternativeName>
        <fullName evidence="1">Pantoate--beta-alanine ligase</fullName>
    </alternativeName>
    <alternativeName>
        <fullName evidence="1">Pantoate-activating enzyme</fullName>
    </alternativeName>
</protein>
<name>PANC_RALPJ</name>